<sequence length="279" mass="31192">MEAVGKHVKLFWNVYSDYAVLIAISLSYFVFDVLMLPFTRQFSLEDITISHPFALHEQVPTKYLGIICVFFPALVLYGFGKLRNNSLLFWKSLMGLLYSTMVCGLCVSLLKNAVGRPRPDFLARCQPFESTPKTGLVDVLSCSVPWSDKVLQDGFRSFPSGHTSFSFAGLGFLAIFLAGQLKMFRNKTSSWKVVVPLVPLSIASWIGLSRSQDYRHHKEDIAVGALFGFAIAYVVYRQLFPPLDHHNADILYVQAELDEGYTNVHSAGNSSATNAEQMV</sequence>
<gene>
    <name type="primary">dpp1</name>
    <name type="ORF">SPBC409.18</name>
</gene>
<keyword id="KW-0256">Endoplasmic reticulum</keyword>
<keyword id="KW-0378">Hydrolase</keyword>
<keyword id="KW-0472">Membrane</keyword>
<keyword id="KW-1185">Reference proteome</keyword>
<keyword id="KW-0812">Transmembrane</keyword>
<keyword id="KW-1133">Transmembrane helix</keyword>
<keyword id="KW-0926">Vacuole</keyword>
<reference key="1">
    <citation type="journal article" date="2002" name="Nature">
        <title>The genome sequence of Schizosaccharomyces pombe.</title>
        <authorList>
            <person name="Wood V."/>
            <person name="Gwilliam R."/>
            <person name="Rajandream M.A."/>
            <person name="Lyne M.H."/>
            <person name="Lyne R."/>
            <person name="Stewart A."/>
            <person name="Sgouros J.G."/>
            <person name="Peat N."/>
            <person name="Hayles J."/>
            <person name="Baker S.G."/>
            <person name="Basham D."/>
            <person name="Bowman S."/>
            <person name="Brooks K."/>
            <person name="Brown D."/>
            <person name="Brown S."/>
            <person name="Chillingworth T."/>
            <person name="Churcher C.M."/>
            <person name="Collins M."/>
            <person name="Connor R."/>
            <person name="Cronin A."/>
            <person name="Davis P."/>
            <person name="Feltwell T."/>
            <person name="Fraser A."/>
            <person name="Gentles S."/>
            <person name="Goble A."/>
            <person name="Hamlin N."/>
            <person name="Harris D.E."/>
            <person name="Hidalgo J."/>
            <person name="Hodgson G."/>
            <person name="Holroyd S."/>
            <person name="Hornsby T."/>
            <person name="Howarth S."/>
            <person name="Huckle E.J."/>
            <person name="Hunt S."/>
            <person name="Jagels K."/>
            <person name="James K.D."/>
            <person name="Jones L."/>
            <person name="Jones M."/>
            <person name="Leather S."/>
            <person name="McDonald S."/>
            <person name="McLean J."/>
            <person name="Mooney P."/>
            <person name="Moule S."/>
            <person name="Mungall K.L."/>
            <person name="Murphy L.D."/>
            <person name="Niblett D."/>
            <person name="Odell C."/>
            <person name="Oliver K."/>
            <person name="O'Neil S."/>
            <person name="Pearson D."/>
            <person name="Quail M.A."/>
            <person name="Rabbinowitsch E."/>
            <person name="Rutherford K.M."/>
            <person name="Rutter S."/>
            <person name="Saunders D."/>
            <person name="Seeger K."/>
            <person name="Sharp S."/>
            <person name="Skelton J."/>
            <person name="Simmonds M.N."/>
            <person name="Squares R."/>
            <person name="Squares S."/>
            <person name="Stevens K."/>
            <person name="Taylor K."/>
            <person name="Taylor R.G."/>
            <person name="Tivey A."/>
            <person name="Walsh S.V."/>
            <person name="Warren T."/>
            <person name="Whitehead S."/>
            <person name="Woodward J.R."/>
            <person name="Volckaert G."/>
            <person name="Aert R."/>
            <person name="Robben J."/>
            <person name="Grymonprez B."/>
            <person name="Weltjens I."/>
            <person name="Vanstreels E."/>
            <person name="Rieger M."/>
            <person name="Schaefer M."/>
            <person name="Mueller-Auer S."/>
            <person name="Gabel C."/>
            <person name="Fuchs M."/>
            <person name="Duesterhoeft A."/>
            <person name="Fritzc C."/>
            <person name="Holzer E."/>
            <person name="Moestl D."/>
            <person name="Hilbert H."/>
            <person name="Borzym K."/>
            <person name="Langer I."/>
            <person name="Beck A."/>
            <person name="Lehrach H."/>
            <person name="Reinhardt R."/>
            <person name="Pohl T.M."/>
            <person name="Eger P."/>
            <person name="Zimmermann W."/>
            <person name="Wedler H."/>
            <person name="Wambutt R."/>
            <person name="Purnelle B."/>
            <person name="Goffeau A."/>
            <person name="Cadieu E."/>
            <person name="Dreano S."/>
            <person name="Gloux S."/>
            <person name="Lelaure V."/>
            <person name="Mottier S."/>
            <person name="Galibert F."/>
            <person name="Aves S.J."/>
            <person name="Xiang Z."/>
            <person name="Hunt C."/>
            <person name="Moore K."/>
            <person name="Hurst S.M."/>
            <person name="Lucas M."/>
            <person name="Rochet M."/>
            <person name="Gaillardin C."/>
            <person name="Tallada V.A."/>
            <person name="Garzon A."/>
            <person name="Thode G."/>
            <person name="Daga R.R."/>
            <person name="Cruzado L."/>
            <person name="Jimenez J."/>
            <person name="Sanchez M."/>
            <person name="del Rey F."/>
            <person name="Benito J."/>
            <person name="Dominguez A."/>
            <person name="Revuelta J.L."/>
            <person name="Moreno S."/>
            <person name="Armstrong J."/>
            <person name="Forsburg S.L."/>
            <person name="Cerutti L."/>
            <person name="Lowe T."/>
            <person name="McCombie W.R."/>
            <person name="Paulsen I."/>
            <person name="Potashkin J."/>
            <person name="Shpakovski G.V."/>
            <person name="Ussery D."/>
            <person name="Barrell B.G."/>
            <person name="Nurse P."/>
        </authorList>
    </citation>
    <scope>NUCLEOTIDE SEQUENCE [LARGE SCALE GENOMIC DNA]</scope>
    <source>
        <strain>972 / ATCC 24843</strain>
    </source>
</reference>
<reference key="2">
    <citation type="journal article" date="2006" name="Nat. Biotechnol.">
        <title>ORFeome cloning and global analysis of protein localization in the fission yeast Schizosaccharomyces pombe.</title>
        <authorList>
            <person name="Matsuyama A."/>
            <person name="Arai R."/>
            <person name="Yashiroda Y."/>
            <person name="Shirai A."/>
            <person name="Kamata A."/>
            <person name="Sekido S."/>
            <person name="Kobayashi Y."/>
            <person name="Hashimoto A."/>
            <person name="Hamamoto M."/>
            <person name="Hiraoka Y."/>
            <person name="Horinouchi S."/>
            <person name="Yoshida M."/>
        </authorList>
    </citation>
    <scope>SUBCELLULAR LOCATION [LARGE SCALE ANALYSIS]</scope>
</reference>
<accession>Q9UUA6</accession>
<evidence type="ECO:0000250" key="1"/>
<evidence type="ECO:0000255" key="2"/>
<evidence type="ECO:0000269" key="3">
    <source>
    </source>
</evidence>
<evidence type="ECO:0000305" key="4"/>
<proteinExistence type="inferred from homology"/>
<protein>
    <recommendedName>
        <fullName>Probable diacylglycerol pyrophosphate phosphatase 1</fullName>
        <shortName>DGPP phosphatase</shortName>
        <ecNumber>3.6.1.75</ecNumber>
    </recommendedName>
    <alternativeName>
        <fullName>Phosphatidate phosphatase</fullName>
        <ecNumber>3.1.3.4</ecNumber>
    </alternativeName>
</protein>
<comment type="function">
    <text evidence="1">Catalyzes the dephosphorylation of diacylglycerol phosphate (DGPP) to phosphatidate (PA) and the subsequent dephosphorylation of PA to diacylglycerol (DAG).</text>
</comment>
<comment type="catalytic activity">
    <reaction>
        <text>a 1,2-diacyl-sn-glycerol 3-diphosphate + H2O = a 1,2-diacyl-sn-glycero-3-phosphate + phosphate + H(+)</text>
        <dbReference type="Rhea" id="RHEA:27449"/>
        <dbReference type="ChEBI" id="CHEBI:15377"/>
        <dbReference type="ChEBI" id="CHEBI:15378"/>
        <dbReference type="ChEBI" id="CHEBI:43474"/>
        <dbReference type="ChEBI" id="CHEBI:58608"/>
        <dbReference type="ChEBI" id="CHEBI:59996"/>
        <dbReference type="EC" id="3.6.1.75"/>
    </reaction>
</comment>
<comment type="catalytic activity">
    <reaction>
        <text>a 1,2-diacyl-sn-glycero-3-phosphate + H2O = a 1,2-diacyl-sn-glycerol + phosphate</text>
        <dbReference type="Rhea" id="RHEA:27429"/>
        <dbReference type="ChEBI" id="CHEBI:15377"/>
        <dbReference type="ChEBI" id="CHEBI:17815"/>
        <dbReference type="ChEBI" id="CHEBI:43474"/>
        <dbReference type="ChEBI" id="CHEBI:58608"/>
        <dbReference type="EC" id="3.1.3.4"/>
    </reaction>
</comment>
<comment type="subcellular location">
    <subcellularLocation>
        <location evidence="1">Vacuole membrane</location>
        <topology evidence="1">Multi-pass membrane protein</topology>
    </subcellularLocation>
    <subcellularLocation>
        <location evidence="3">Endoplasmic reticulum membrane</location>
        <topology evidence="3">Multi-pass membrane protein</topology>
    </subcellularLocation>
</comment>
<comment type="similarity">
    <text evidence="4">Belongs to the PA-phosphatase related phosphoesterase family.</text>
</comment>
<name>DPP1_SCHPO</name>
<feature type="chain" id="PRO_0000358314" description="Probable diacylglycerol pyrophosphate phosphatase 1">
    <location>
        <begin position="1"/>
        <end position="279"/>
    </location>
</feature>
<feature type="topological domain" description="Lumenal" evidence="2">
    <location>
        <begin position="1"/>
        <end position="17"/>
    </location>
</feature>
<feature type="transmembrane region" description="Helical" evidence="2">
    <location>
        <begin position="18"/>
        <end position="38"/>
    </location>
</feature>
<feature type="topological domain" description="Cytoplasmic" evidence="2">
    <location>
        <begin position="39"/>
        <end position="58"/>
    </location>
</feature>
<feature type="transmembrane region" description="Helical" evidence="2">
    <location>
        <begin position="59"/>
        <end position="79"/>
    </location>
</feature>
<feature type="topological domain" description="Lumenal" evidence="2">
    <location>
        <begin position="80"/>
        <end position="86"/>
    </location>
</feature>
<feature type="transmembrane region" description="Helical" evidence="2">
    <location>
        <begin position="87"/>
        <end position="107"/>
    </location>
</feature>
<feature type="topological domain" description="Cytoplasmic" evidence="2">
    <location>
        <begin position="108"/>
        <end position="163"/>
    </location>
</feature>
<feature type="transmembrane region" description="Helical" evidence="2">
    <location>
        <begin position="164"/>
        <end position="184"/>
    </location>
</feature>
<feature type="topological domain" description="Lumenal" evidence="2">
    <location>
        <begin position="185"/>
        <end position="187"/>
    </location>
</feature>
<feature type="transmembrane region" description="Helical" evidence="2">
    <location>
        <begin position="188"/>
        <end position="208"/>
    </location>
</feature>
<feature type="topological domain" description="Cytoplasmic" evidence="2">
    <location>
        <begin position="209"/>
        <end position="220"/>
    </location>
</feature>
<feature type="transmembrane region" description="Helical" evidence="2">
    <location>
        <begin position="221"/>
        <end position="241"/>
    </location>
</feature>
<feature type="topological domain" description="Lumenal" evidence="2">
    <location>
        <begin position="242"/>
        <end position="279"/>
    </location>
</feature>
<feature type="region of interest" description="Phosphatase sequence motif I">
    <location>
        <begin position="111"/>
        <end position="119"/>
    </location>
</feature>
<feature type="region of interest" description="Phosphatase sequence motif II">
    <location>
        <begin position="159"/>
        <end position="162"/>
    </location>
</feature>
<feature type="region of interest" description="Phosphatase sequence motif III">
    <location>
        <begin position="209"/>
        <end position="220"/>
    </location>
</feature>
<organism>
    <name type="scientific">Schizosaccharomyces pombe (strain 972 / ATCC 24843)</name>
    <name type="common">Fission yeast</name>
    <dbReference type="NCBI Taxonomy" id="284812"/>
    <lineage>
        <taxon>Eukaryota</taxon>
        <taxon>Fungi</taxon>
        <taxon>Dikarya</taxon>
        <taxon>Ascomycota</taxon>
        <taxon>Taphrinomycotina</taxon>
        <taxon>Schizosaccharomycetes</taxon>
        <taxon>Schizosaccharomycetales</taxon>
        <taxon>Schizosaccharomycetaceae</taxon>
        <taxon>Schizosaccharomyces</taxon>
    </lineage>
</organism>
<dbReference type="EC" id="3.6.1.75"/>
<dbReference type="EC" id="3.1.3.4"/>
<dbReference type="EMBL" id="CU329671">
    <property type="protein sequence ID" value="CAB52620.1"/>
    <property type="molecule type" value="Genomic_DNA"/>
</dbReference>
<dbReference type="PIR" id="T40445">
    <property type="entry name" value="T40445"/>
</dbReference>
<dbReference type="RefSeq" id="NP_595468.1">
    <property type="nucleotide sequence ID" value="NM_001021378.2"/>
</dbReference>
<dbReference type="BioGRID" id="277593">
    <property type="interactions" value="8"/>
</dbReference>
<dbReference type="FunCoup" id="Q9UUA6">
    <property type="interactions" value="76"/>
</dbReference>
<dbReference type="STRING" id="284812.Q9UUA6"/>
<dbReference type="PaxDb" id="4896-SPBC409.18.1"/>
<dbReference type="EnsemblFungi" id="SPBC409.18.1">
    <property type="protein sequence ID" value="SPBC409.18.1:pep"/>
    <property type="gene ID" value="SPBC409.18"/>
</dbReference>
<dbReference type="KEGG" id="spo:2541078"/>
<dbReference type="PomBase" id="SPBC409.18"/>
<dbReference type="VEuPathDB" id="FungiDB:SPBC409.18"/>
<dbReference type="eggNOG" id="KOG3030">
    <property type="taxonomic scope" value="Eukaryota"/>
</dbReference>
<dbReference type="HOGENOM" id="CLU_021458_6_1_1"/>
<dbReference type="InParanoid" id="Q9UUA6"/>
<dbReference type="OMA" id="WFSYRRY"/>
<dbReference type="PhylomeDB" id="Q9UUA6"/>
<dbReference type="Reactome" id="R-SPO-2029485">
    <property type="pathway name" value="Role of phospholipids in phagocytosis"/>
</dbReference>
<dbReference type="Reactome" id="R-SPO-419408">
    <property type="pathway name" value="Lysosphingolipid and LPA receptors"/>
</dbReference>
<dbReference type="Reactome" id="R-SPO-9845614">
    <property type="pathway name" value="Sphingolipid catabolism"/>
</dbReference>
<dbReference type="PRO" id="PR:Q9UUA6"/>
<dbReference type="Proteomes" id="UP000002485">
    <property type="component" value="Chromosome II"/>
</dbReference>
<dbReference type="GO" id="GO:0005783">
    <property type="term" value="C:endoplasmic reticulum"/>
    <property type="evidence" value="ECO:0007005"/>
    <property type="project" value="PomBase"/>
</dbReference>
<dbReference type="GO" id="GO:0005789">
    <property type="term" value="C:endoplasmic reticulum membrane"/>
    <property type="evidence" value="ECO:0007669"/>
    <property type="project" value="UniProtKB-SubCell"/>
</dbReference>
<dbReference type="GO" id="GO:0000329">
    <property type="term" value="C:fungal-type vacuole membrane"/>
    <property type="evidence" value="ECO:0000266"/>
    <property type="project" value="PomBase"/>
</dbReference>
<dbReference type="GO" id="GO:0016020">
    <property type="term" value="C:membrane"/>
    <property type="evidence" value="ECO:0000318"/>
    <property type="project" value="GO_Central"/>
</dbReference>
<dbReference type="GO" id="GO:0000810">
    <property type="term" value="F:diacylglycerol diphosphate phosphatase activity"/>
    <property type="evidence" value="ECO:0000266"/>
    <property type="project" value="PomBase"/>
</dbReference>
<dbReference type="GO" id="GO:0008195">
    <property type="term" value="F:phosphatidate phosphatase activity"/>
    <property type="evidence" value="ECO:0000318"/>
    <property type="project" value="GO_Central"/>
</dbReference>
<dbReference type="GO" id="GO:0046839">
    <property type="term" value="P:phospholipid dephosphorylation"/>
    <property type="evidence" value="ECO:0000318"/>
    <property type="project" value="GO_Central"/>
</dbReference>
<dbReference type="GO" id="GO:0006644">
    <property type="term" value="P:phospholipid metabolic process"/>
    <property type="evidence" value="ECO:0000318"/>
    <property type="project" value="GO_Central"/>
</dbReference>
<dbReference type="CDD" id="cd03390">
    <property type="entry name" value="PAP2_containing_1_like"/>
    <property type="match status" value="1"/>
</dbReference>
<dbReference type="Gene3D" id="1.20.144.10">
    <property type="entry name" value="Phosphatidic acid phosphatase type 2/haloperoxidase"/>
    <property type="match status" value="1"/>
</dbReference>
<dbReference type="InterPro" id="IPR036938">
    <property type="entry name" value="P_Acid_Pase_2/haloperoxi_sf"/>
</dbReference>
<dbReference type="InterPro" id="IPR000326">
    <property type="entry name" value="P_Acid_Pase_2/haloperoxidase"/>
</dbReference>
<dbReference type="InterPro" id="IPR043216">
    <property type="entry name" value="PA_PP_rel"/>
</dbReference>
<dbReference type="PANTHER" id="PTHR10165">
    <property type="entry name" value="LIPID PHOSPHATE PHOSPHATASE"/>
    <property type="match status" value="1"/>
</dbReference>
<dbReference type="PANTHER" id="PTHR10165:SF35">
    <property type="entry name" value="RE23632P"/>
    <property type="match status" value="1"/>
</dbReference>
<dbReference type="Pfam" id="PF01569">
    <property type="entry name" value="PAP2"/>
    <property type="match status" value="1"/>
</dbReference>
<dbReference type="SMART" id="SM00014">
    <property type="entry name" value="acidPPc"/>
    <property type="match status" value="1"/>
</dbReference>
<dbReference type="SUPFAM" id="SSF48317">
    <property type="entry name" value="Acid phosphatase/Vanadium-dependent haloperoxidase"/>
    <property type="match status" value="1"/>
</dbReference>